<keyword id="KW-0119">Carbohydrate metabolism</keyword>
<keyword id="KW-0963">Cytoplasm</keyword>
<keyword id="KW-0378">Hydrolase</keyword>
<keyword id="KW-0460">Magnesium</keyword>
<keyword id="KW-0479">Metal-binding</keyword>
<keyword id="KW-1185">Reference proteome</keyword>
<accession>A1AJD7</accession>
<reference key="1">
    <citation type="journal article" date="2007" name="J. Bacteriol.">
        <title>The genome sequence of avian pathogenic Escherichia coli strain O1:K1:H7 shares strong similarities with human extraintestinal pathogenic E. coli genomes.</title>
        <authorList>
            <person name="Johnson T.J."/>
            <person name="Kariyawasam S."/>
            <person name="Wannemuehler Y."/>
            <person name="Mangiamele P."/>
            <person name="Johnson S.J."/>
            <person name="Doetkott C."/>
            <person name="Skyberg J.A."/>
            <person name="Lynne A.M."/>
            <person name="Johnson J.R."/>
            <person name="Nolan L.K."/>
        </authorList>
    </citation>
    <scope>NUCLEOTIDE SEQUENCE [LARGE SCALE GENOMIC DNA]</scope>
</reference>
<name>F16PA_ECOK1</name>
<feature type="chain" id="PRO_0000364552" description="Fructose-1,6-bisphosphatase class 1">
    <location>
        <begin position="1"/>
        <end position="332"/>
    </location>
</feature>
<feature type="binding site" evidence="1">
    <location>
        <position position="89"/>
    </location>
    <ligand>
        <name>Mg(2+)</name>
        <dbReference type="ChEBI" id="CHEBI:18420"/>
        <label>1</label>
    </ligand>
</feature>
<feature type="binding site" evidence="1">
    <location>
        <position position="110"/>
    </location>
    <ligand>
        <name>Mg(2+)</name>
        <dbReference type="ChEBI" id="CHEBI:18420"/>
        <label>1</label>
    </ligand>
</feature>
<feature type="binding site" evidence="1">
    <location>
        <position position="110"/>
    </location>
    <ligand>
        <name>Mg(2+)</name>
        <dbReference type="ChEBI" id="CHEBI:18420"/>
        <label>2</label>
    </ligand>
</feature>
<feature type="binding site" evidence="1">
    <location>
        <position position="112"/>
    </location>
    <ligand>
        <name>Mg(2+)</name>
        <dbReference type="ChEBI" id="CHEBI:18420"/>
        <label>1</label>
    </ligand>
</feature>
<feature type="binding site" evidence="1">
    <location>
        <begin position="113"/>
        <end position="116"/>
    </location>
    <ligand>
        <name>substrate</name>
    </ligand>
</feature>
<feature type="binding site" evidence="1">
    <location>
        <position position="113"/>
    </location>
    <ligand>
        <name>Mg(2+)</name>
        <dbReference type="ChEBI" id="CHEBI:18420"/>
        <label>2</label>
    </ligand>
</feature>
<feature type="binding site" evidence="1">
    <location>
        <position position="206"/>
    </location>
    <ligand>
        <name>substrate</name>
    </ligand>
</feature>
<feature type="binding site" evidence="1">
    <location>
        <position position="239"/>
    </location>
    <ligand>
        <name>substrate</name>
    </ligand>
</feature>
<feature type="binding site" evidence="1">
    <location>
        <begin position="257"/>
        <end position="259"/>
    </location>
    <ligand>
        <name>substrate</name>
    </ligand>
</feature>
<feature type="binding site" evidence="1">
    <location>
        <position position="269"/>
    </location>
    <ligand>
        <name>substrate</name>
    </ligand>
</feature>
<feature type="binding site" evidence="1">
    <location>
        <position position="275"/>
    </location>
    <ligand>
        <name>Mg(2+)</name>
        <dbReference type="ChEBI" id="CHEBI:18420"/>
        <label>2</label>
    </ligand>
</feature>
<dbReference type="EC" id="3.1.3.11" evidence="1"/>
<dbReference type="EMBL" id="CP000468">
    <property type="protein sequence ID" value="ABJ03777.1"/>
    <property type="molecule type" value="Genomic_DNA"/>
</dbReference>
<dbReference type="RefSeq" id="WP_000853753.1">
    <property type="nucleotide sequence ID" value="NZ_CADILS010000031.1"/>
</dbReference>
<dbReference type="SMR" id="A1AJD7"/>
<dbReference type="GeneID" id="86861371"/>
<dbReference type="KEGG" id="ecv:APECO1_2160"/>
<dbReference type="HOGENOM" id="CLU_039977_2_2_6"/>
<dbReference type="UniPathway" id="UPA00138"/>
<dbReference type="Proteomes" id="UP000008216">
    <property type="component" value="Chromosome"/>
</dbReference>
<dbReference type="GO" id="GO:0005829">
    <property type="term" value="C:cytosol"/>
    <property type="evidence" value="ECO:0007669"/>
    <property type="project" value="TreeGrafter"/>
</dbReference>
<dbReference type="GO" id="GO:0042132">
    <property type="term" value="F:fructose 1,6-bisphosphate 1-phosphatase activity"/>
    <property type="evidence" value="ECO:0007669"/>
    <property type="project" value="UniProtKB-UniRule"/>
</dbReference>
<dbReference type="GO" id="GO:0000287">
    <property type="term" value="F:magnesium ion binding"/>
    <property type="evidence" value="ECO:0007669"/>
    <property type="project" value="UniProtKB-UniRule"/>
</dbReference>
<dbReference type="GO" id="GO:0030388">
    <property type="term" value="P:fructose 1,6-bisphosphate metabolic process"/>
    <property type="evidence" value="ECO:0007669"/>
    <property type="project" value="TreeGrafter"/>
</dbReference>
<dbReference type="GO" id="GO:0006002">
    <property type="term" value="P:fructose 6-phosphate metabolic process"/>
    <property type="evidence" value="ECO:0007669"/>
    <property type="project" value="TreeGrafter"/>
</dbReference>
<dbReference type="GO" id="GO:0006000">
    <property type="term" value="P:fructose metabolic process"/>
    <property type="evidence" value="ECO:0007669"/>
    <property type="project" value="TreeGrafter"/>
</dbReference>
<dbReference type="GO" id="GO:0006094">
    <property type="term" value="P:gluconeogenesis"/>
    <property type="evidence" value="ECO:0007669"/>
    <property type="project" value="UniProtKB-UniRule"/>
</dbReference>
<dbReference type="GO" id="GO:0005986">
    <property type="term" value="P:sucrose biosynthetic process"/>
    <property type="evidence" value="ECO:0007669"/>
    <property type="project" value="TreeGrafter"/>
</dbReference>
<dbReference type="CDD" id="cd00354">
    <property type="entry name" value="FBPase"/>
    <property type="match status" value="1"/>
</dbReference>
<dbReference type="FunFam" id="3.30.540.10:FF:000002">
    <property type="entry name" value="Fructose-1,6-bisphosphatase class 1"/>
    <property type="match status" value="1"/>
</dbReference>
<dbReference type="FunFam" id="3.40.190.80:FF:000001">
    <property type="entry name" value="Fructose-1,6-bisphosphatase class 1"/>
    <property type="match status" value="1"/>
</dbReference>
<dbReference type="Gene3D" id="3.40.190.80">
    <property type="match status" value="1"/>
</dbReference>
<dbReference type="Gene3D" id="3.30.540.10">
    <property type="entry name" value="Fructose-1,6-Bisphosphatase, subunit A, domain 1"/>
    <property type="match status" value="1"/>
</dbReference>
<dbReference type="HAMAP" id="MF_01855">
    <property type="entry name" value="FBPase_class1"/>
    <property type="match status" value="1"/>
</dbReference>
<dbReference type="InterPro" id="IPR044015">
    <property type="entry name" value="FBPase_C_dom"/>
</dbReference>
<dbReference type="InterPro" id="IPR000146">
    <property type="entry name" value="FBPase_class-1"/>
</dbReference>
<dbReference type="InterPro" id="IPR033391">
    <property type="entry name" value="FBPase_N"/>
</dbReference>
<dbReference type="InterPro" id="IPR028343">
    <property type="entry name" value="FBPtase"/>
</dbReference>
<dbReference type="InterPro" id="IPR020548">
    <property type="entry name" value="Fructose_bisphosphatase_AS"/>
</dbReference>
<dbReference type="NCBIfam" id="NF006778">
    <property type="entry name" value="PRK09293.1-1"/>
    <property type="match status" value="1"/>
</dbReference>
<dbReference type="NCBIfam" id="NF006779">
    <property type="entry name" value="PRK09293.1-3"/>
    <property type="match status" value="1"/>
</dbReference>
<dbReference type="PANTHER" id="PTHR11556">
    <property type="entry name" value="FRUCTOSE-1,6-BISPHOSPHATASE-RELATED"/>
    <property type="match status" value="1"/>
</dbReference>
<dbReference type="PANTHER" id="PTHR11556:SF35">
    <property type="entry name" value="SEDOHEPTULOSE-1,7-BISPHOSPHATASE, CHLOROPLASTIC"/>
    <property type="match status" value="1"/>
</dbReference>
<dbReference type="Pfam" id="PF00316">
    <property type="entry name" value="FBPase"/>
    <property type="match status" value="1"/>
</dbReference>
<dbReference type="Pfam" id="PF18913">
    <property type="entry name" value="FBPase_C"/>
    <property type="match status" value="1"/>
</dbReference>
<dbReference type="PIRSF" id="PIRSF500210">
    <property type="entry name" value="FBPtase"/>
    <property type="match status" value="1"/>
</dbReference>
<dbReference type="PIRSF" id="PIRSF000904">
    <property type="entry name" value="FBPtase_SBPase"/>
    <property type="match status" value="1"/>
</dbReference>
<dbReference type="PRINTS" id="PR00115">
    <property type="entry name" value="F16BPHPHTASE"/>
</dbReference>
<dbReference type="SUPFAM" id="SSF56655">
    <property type="entry name" value="Carbohydrate phosphatase"/>
    <property type="match status" value="1"/>
</dbReference>
<dbReference type="PROSITE" id="PS00124">
    <property type="entry name" value="FBPASE"/>
    <property type="match status" value="1"/>
</dbReference>
<organism>
    <name type="scientific">Escherichia coli O1:K1 / APEC</name>
    <dbReference type="NCBI Taxonomy" id="405955"/>
    <lineage>
        <taxon>Bacteria</taxon>
        <taxon>Pseudomonadati</taxon>
        <taxon>Pseudomonadota</taxon>
        <taxon>Gammaproteobacteria</taxon>
        <taxon>Enterobacterales</taxon>
        <taxon>Enterobacteriaceae</taxon>
        <taxon>Escherichia</taxon>
    </lineage>
</organism>
<protein>
    <recommendedName>
        <fullName evidence="1">Fructose-1,6-bisphosphatase class 1</fullName>
        <shortName evidence="1">FBPase class 1</shortName>
        <ecNumber evidence="1">3.1.3.11</ecNumber>
    </recommendedName>
    <alternativeName>
        <fullName evidence="1">D-fructose-1,6-bisphosphate 1-phosphohydrolase class 1</fullName>
    </alternativeName>
</protein>
<gene>
    <name evidence="1" type="primary">fbp</name>
    <name type="ordered locus">Ecok1_42830</name>
    <name type="ORF">APECO1_2160</name>
</gene>
<comment type="catalytic activity">
    <reaction evidence="1">
        <text>beta-D-fructose 1,6-bisphosphate + H2O = beta-D-fructose 6-phosphate + phosphate</text>
        <dbReference type="Rhea" id="RHEA:11064"/>
        <dbReference type="ChEBI" id="CHEBI:15377"/>
        <dbReference type="ChEBI" id="CHEBI:32966"/>
        <dbReference type="ChEBI" id="CHEBI:43474"/>
        <dbReference type="ChEBI" id="CHEBI:57634"/>
        <dbReference type="EC" id="3.1.3.11"/>
    </reaction>
</comment>
<comment type="cofactor">
    <cofactor evidence="1">
        <name>Mg(2+)</name>
        <dbReference type="ChEBI" id="CHEBI:18420"/>
    </cofactor>
    <text evidence="1">Binds 2 magnesium ions per subunit.</text>
</comment>
<comment type="pathway">
    <text evidence="1">Carbohydrate biosynthesis; gluconeogenesis.</text>
</comment>
<comment type="subunit">
    <text evidence="1">Homotetramer.</text>
</comment>
<comment type="subcellular location">
    <subcellularLocation>
        <location evidence="1">Cytoplasm</location>
    </subcellularLocation>
</comment>
<comment type="similarity">
    <text evidence="1">Belongs to the FBPase class 1 family.</text>
</comment>
<sequence>MKTLGEFIVEKQHEFSHATGELTALLSAIKLGAKIIHRDINKAGLVDILGASGAENVQGEVQQKLDLFANEKLKAALKARDIVAGIASEEEDEIVVFEGCEHAKYVVLMDPLDGSSNIDVNVSVGTIFSIYRRVTPVGTPVTEEDFLQPGNKQVAAGYVVYGSSTMLVYTTGCGVHAFTYDPSLGVFCLCQERMRFPEKGKTYSINEGNYIKFPNGVKKYIKFCQEEDKSTNRPYTSRYIGSLVADFHRNLLKGGIYLYPSTASHPDGKLRLLYECNPMAFLAEQAGGKASDGKERILDIIPETLHQRRSFFVGNDHMVEDVERFIREFPDA</sequence>
<proteinExistence type="inferred from homology"/>
<evidence type="ECO:0000255" key="1">
    <source>
        <dbReference type="HAMAP-Rule" id="MF_01855"/>
    </source>
</evidence>